<comment type="function">
    <text evidence="1">Presumably involved in the processing and regular turnover of intracellular proteins. Catalyzes the removal of unsubstituted N-terminal amino acids from various peptides.</text>
</comment>
<comment type="catalytic activity">
    <reaction evidence="1">
        <text>Release of an N-terminal amino acid, Xaa-|-Yaa-, in which Xaa is preferably Leu, but may be other amino acids including Pro although not Arg or Lys, and Yaa may be Pro. Amino acid amides and methyl esters are also readily hydrolyzed, but rates on arylamides are exceedingly low.</text>
        <dbReference type="EC" id="3.4.11.1"/>
    </reaction>
</comment>
<comment type="catalytic activity">
    <reaction evidence="1">
        <text>Release of an N-terminal amino acid, preferentially leucine, but not glutamic or aspartic acids.</text>
        <dbReference type="EC" id="3.4.11.10"/>
    </reaction>
</comment>
<comment type="cofactor">
    <cofactor evidence="1">
        <name>Mn(2+)</name>
        <dbReference type="ChEBI" id="CHEBI:29035"/>
    </cofactor>
    <text evidence="1">Binds 2 manganese ions per subunit.</text>
</comment>
<comment type="subcellular location">
    <subcellularLocation>
        <location evidence="1">Cytoplasm</location>
    </subcellularLocation>
</comment>
<comment type="similarity">
    <text evidence="1">Belongs to the peptidase M17 family.</text>
</comment>
<sequence length="507" mass="53618">MKTTLVSTPLAQLETELLAVFATDTAPAADMANGTQASPQVQLLTRDAALDAAVKTILASGDFKAEANETLLIHAPQGMAARRLLLVGAGKQARFTVHALRKAAGSAVRAARAKNIREATLAIPQSQGLDVTATARALGHGAAVADFDPDFYRSDRKDKSLQSLTLALPEATDANAAEAGLREGIALGESQNLTRTLVNEPGNRLTPTLLGEQAKKMCAEQGLRCQVYSSEKLHELKMGSFWSVTQGSDEPPALIVMEYTPEGAAEGPVLGLVGKGITFDSGGLSLKPADSMEKMKYDMAGAAAMIGAMRAIALLKPRIKVISVICSAENMPSGKAQKPGDVQISMIGKSIEVLNTDAEGRLVLADGLAYAKQLGATHLIDAATLTGAVMVALGGVNAGVFCNDEEAWQHFEAALGQSGEKFWRLPLDEEYREMLRSPIADIKNVGGRYGGASTAAMFLKEFVGDTPWVHLDIAGTAWMDEAKPWMSSGPSGIAMPSIVEWVRSFAR</sequence>
<gene>
    <name evidence="1" type="primary">pepA</name>
    <name type="ordered locus">ACP_2959</name>
</gene>
<name>AMPA_ACIC5</name>
<proteinExistence type="inferred from homology"/>
<accession>C1F4B7</accession>
<protein>
    <recommendedName>
        <fullName evidence="1">Probable cytosol aminopeptidase</fullName>
        <ecNumber evidence="1">3.4.11.1</ecNumber>
    </recommendedName>
    <alternativeName>
        <fullName evidence="1">Leucine aminopeptidase</fullName>
        <shortName evidence="1">LAP</shortName>
        <ecNumber evidence="1">3.4.11.10</ecNumber>
    </alternativeName>
    <alternativeName>
        <fullName evidence="1">Leucyl aminopeptidase</fullName>
    </alternativeName>
</protein>
<feature type="chain" id="PRO_1000192700" description="Probable cytosol aminopeptidase">
    <location>
        <begin position="1"/>
        <end position="507"/>
    </location>
</feature>
<feature type="active site" evidence="1">
    <location>
        <position position="287"/>
    </location>
</feature>
<feature type="active site" evidence="1">
    <location>
        <position position="361"/>
    </location>
</feature>
<feature type="binding site" evidence="1">
    <location>
        <position position="275"/>
    </location>
    <ligand>
        <name>Mn(2+)</name>
        <dbReference type="ChEBI" id="CHEBI:29035"/>
        <label>2</label>
    </ligand>
</feature>
<feature type="binding site" evidence="1">
    <location>
        <position position="280"/>
    </location>
    <ligand>
        <name>Mn(2+)</name>
        <dbReference type="ChEBI" id="CHEBI:29035"/>
        <label>1</label>
    </ligand>
</feature>
<feature type="binding site" evidence="1">
    <location>
        <position position="280"/>
    </location>
    <ligand>
        <name>Mn(2+)</name>
        <dbReference type="ChEBI" id="CHEBI:29035"/>
        <label>2</label>
    </ligand>
</feature>
<feature type="binding site" evidence="1">
    <location>
        <position position="298"/>
    </location>
    <ligand>
        <name>Mn(2+)</name>
        <dbReference type="ChEBI" id="CHEBI:29035"/>
        <label>2</label>
    </ligand>
</feature>
<feature type="binding site" evidence="1">
    <location>
        <position position="357"/>
    </location>
    <ligand>
        <name>Mn(2+)</name>
        <dbReference type="ChEBI" id="CHEBI:29035"/>
        <label>1</label>
    </ligand>
</feature>
<feature type="binding site" evidence="1">
    <location>
        <position position="359"/>
    </location>
    <ligand>
        <name>Mn(2+)</name>
        <dbReference type="ChEBI" id="CHEBI:29035"/>
        <label>1</label>
    </ligand>
</feature>
<feature type="binding site" evidence="1">
    <location>
        <position position="359"/>
    </location>
    <ligand>
        <name>Mn(2+)</name>
        <dbReference type="ChEBI" id="CHEBI:29035"/>
        <label>2</label>
    </ligand>
</feature>
<evidence type="ECO:0000255" key="1">
    <source>
        <dbReference type="HAMAP-Rule" id="MF_00181"/>
    </source>
</evidence>
<organism>
    <name type="scientific">Acidobacterium capsulatum (strain ATCC 51196 / DSM 11244 / BCRC 80197 / JCM 7670 / NBRC 15755 / NCIMB 13165 / 161)</name>
    <dbReference type="NCBI Taxonomy" id="240015"/>
    <lineage>
        <taxon>Bacteria</taxon>
        <taxon>Pseudomonadati</taxon>
        <taxon>Acidobacteriota</taxon>
        <taxon>Terriglobia</taxon>
        <taxon>Terriglobales</taxon>
        <taxon>Acidobacteriaceae</taxon>
        <taxon>Acidobacterium</taxon>
    </lineage>
</organism>
<reference key="1">
    <citation type="journal article" date="2009" name="Appl. Environ. Microbiol.">
        <title>Three genomes from the phylum Acidobacteria provide insight into the lifestyles of these microorganisms in soils.</title>
        <authorList>
            <person name="Ward N.L."/>
            <person name="Challacombe J.F."/>
            <person name="Janssen P.H."/>
            <person name="Henrissat B."/>
            <person name="Coutinho P.M."/>
            <person name="Wu M."/>
            <person name="Xie G."/>
            <person name="Haft D.H."/>
            <person name="Sait M."/>
            <person name="Badger J."/>
            <person name="Barabote R.D."/>
            <person name="Bradley B."/>
            <person name="Brettin T.S."/>
            <person name="Brinkac L.M."/>
            <person name="Bruce D."/>
            <person name="Creasy T."/>
            <person name="Daugherty S.C."/>
            <person name="Davidsen T.M."/>
            <person name="DeBoy R.T."/>
            <person name="Detter J.C."/>
            <person name="Dodson R.J."/>
            <person name="Durkin A.S."/>
            <person name="Ganapathy A."/>
            <person name="Gwinn-Giglio M."/>
            <person name="Han C.S."/>
            <person name="Khouri H."/>
            <person name="Kiss H."/>
            <person name="Kothari S.P."/>
            <person name="Madupu R."/>
            <person name="Nelson K.E."/>
            <person name="Nelson W.C."/>
            <person name="Paulsen I."/>
            <person name="Penn K."/>
            <person name="Ren Q."/>
            <person name="Rosovitz M.J."/>
            <person name="Selengut J.D."/>
            <person name="Shrivastava S."/>
            <person name="Sullivan S.A."/>
            <person name="Tapia R."/>
            <person name="Thompson L.S."/>
            <person name="Watkins K.L."/>
            <person name="Yang Q."/>
            <person name="Yu C."/>
            <person name="Zafar N."/>
            <person name="Zhou L."/>
            <person name="Kuske C.R."/>
        </authorList>
    </citation>
    <scope>NUCLEOTIDE SEQUENCE [LARGE SCALE GENOMIC DNA]</scope>
    <source>
        <strain>ATCC 51196 / DSM 11244 / BCRC 80197 / JCM 7670 / NBRC 15755 / NCIMB 13165 / 161</strain>
    </source>
</reference>
<keyword id="KW-0031">Aminopeptidase</keyword>
<keyword id="KW-0963">Cytoplasm</keyword>
<keyword id="KW-0378">Hydrolase</keyword>
<keyword id="KW-0464">Manganese</keyword>
<keyword id="KW-0479">Metal-binding</keyword>
<keyword id="KW-0645">Protease</keyword>
<keyword id="KW-1185">Reference proteome</keyword>
<dbReference type="EC" id="3.4.11.1" evidence="1"/>
<dbReference type="EC" id="3.4.11.10" evidence="1"/>
<dbReference type="EMBL" id="CP001472">
    <property type="protein sequence ID" value="ACO34361.1"/>
    <property type="molecule type" value="Genomic_DNA"/>
</dbReference>
<dbReference type="RefSeq" id="WP_015898009.1">
    <property type="nucleotide sequence ID" value="NC_012483.1"/>
</dbReference>
<dbReference type="SMR" id="C1F4B7"/>
<dbReference type="FunCoup" id="C1F4B7">
    <property type="interactions" value="429"/>
</dbReference>
<dbReference type="STRING" id="240015.ACP_2959"/>
<dbReference type="KEGG" id="aca:ACP_2959"/>
<dbReference type="eggNOG" id="COG0260">
    <property type="taxonomic scope" value="Bacteria"/>
</dbReference>
<dbReference type="HOGENOM" id="CLU_013734_2_2_0"/>
<dbReference type="InParanoid" id="C1F4B7"/>
<dbReference type="OrthoDB" id="9809354at2"/>
<dbReference type="Proteomes" id="UP000002207">
    <property type="component" value="Chromosome"/>
</dbReference>
<dbReference type="GO" id="GO:0005737">
    <property type="term" value="C:cytoplasm"/>
    <property type="evidence" value="ECO:0007669"/>
    <property type="project" value="UniProtKB-SubCell"/>
</dbReference>
<dbReference type="GO" id="GO:0030145">
    <property type="term" value="F:manganese ion binding"/>
    <property type="evidence" value="ECO:0007669"/>
    <property type="project" value="UniProtKB-UniRule"/>
</dbReference>
<dbReference type="GO" id="GO:0070006">
    <property type="term" value="F:metalloaminopeptidase activity"/>
    <property type="evidence" value="ECO:0007669"/>
    <property type="project" value="InterPro"/>
</dbReference>
<dbReference type="GO" id="GO:0006508">
    <property type="term" value="P:proteolysis"/>
    <property type="evidence" value="ECO:0007669"/>
    <property type="project" value="UniProtKB-KW"/>
</dbReference>
<dbReference type="CDD" id="cd00433">
    <property type="entry name" value="Peptidase_M17"/>
    <property type="match status" value="1"/>
</dbReference>
<dbReference type="Gene3D" id="3.40.220.10">
    <property type="entry name" value="Leucine Aminopeptidase, subunit E, domain 1"/>
    <property type="match status" value="1"/>
</dbReference>
<dbReference type="Gene3D" id="3.40.630.10">
    <property type="entry name" value="Zn peptidases"/>
    <property type="match status" value="1"/>
</dbReference>
<dbReference type="HAMAP" id="MF_00181">
    <property type="entry name" value="Cytosol_peptidase_M17"/>
    <property type="match status" value="1"/>
</dbReference>
<dbReference type="InterPro" id="IPR011356">
    <property type="entry name" value="Leucine_aapep/pepB"/>
</dbReference>
<dbReference type="InterPro" id="IPR043472">
    <property type="entry name" value="Macro_dom-like"/>
</dbReference>
<dbReference type="InterPro" id="IPR000819">
    <property type="entry name" value="Peptidase_M17_C"/>
</dbReference>
<dbReference type="InterPro" id="IPR023042">
    <property type="entry name" value="Peptidase_M17_leu_NH2_pept"/>
</dbReference>
<dbReference type="InterPro" id="IPR008283">
    <property type="entry name" value="Peptidase_M17_N"/>
</dbReference>
<dbReference type="NCBIfam" id="NF002073">
    <property type="entry name" value="PRK00913.1-2"/>
    <property type="match status" value="1"/>
</dbReference>
<dbReference type="NCBIfam" id="NF002074">
    <property type="entry name" value="PRK00913.1-4"/>
    <property type="match status" value="1"/>
</dbReference>
<dbReference type="NCBIfam" id="NF002083">
    <property type="entry name" value="PRK00913.3-5"/>
    <property type="match status" value="1"/>
</dbReference>
<dbReference type="PANTHER" id="PTHR11963:SF23">
    <property type="entry name" value="CYTOSOL AMINOPEPTIDASE"/>
    <property type="match status" value="1"/>
</dbReference>
<dbReference type="PANTHER" id="PTHR11963">
    <property type="entry name" value="LEUCINE AMINOPEPTIDASE-RELATED"/>
    <property type="match status" value="1"/>
</dbReference>
<dbReference type="Pfam" id="PF00883">
    <property type="entry name" value="Peptidase_M17"/>
    <property type="match status" value="1"/>
</dbReference>
<dbReference type="Pfam" id="PF02789">
    <property type="entry name" value="Peptidase_M17_N"/>
    <property type="match status" value="1"/>
</dbReference>
<dbReference type="PRINTS" id="PR00481">
    <property type="entry name" value="LAMNOPPTDASE"/>
</dbReference>
<dbReference type="SUPFAM" id="SSF52949">
    <property type="entry name" value="Macro domain-like"/>
    <property type="match status" value="1"/>
</dbReference>
<dbReference type="SUPFAM" id="SSF53187">
    <property type="entry name" value="Zn-dependent exopeptidases"/>
    <property type="match status" value="1"/>
</dbReference>
<dbReference type="PROSITE" id="PS00631">
    <property type="entry name" value="CYTOSOL_AP"/>
    <property type="match status" value="1"/>
</dbReference>